<proteinExistence type="inferred from homology"/>
<name>TM14A_PIG</name>
<protein>
    <recommendedName>
        <fullName>Transmembrane protein 14A</fullName>
    </recommendedName>
</protein>
<dbReference type="EMBL" id="BE233236">
    <property type="status" value="NOT_ANNOTATED_CDS"/>
    <property type="molecule type" value="mRNA"/>
</dbReference>
<dbReference type="RefSeq" id="XP_003128844.1">
    <property type="nucleotide sequence ID" value="XM_003128796.4"/>
</dbReference>
<dbReference type="RefSeq" id="XP_003482377.1">
    <property type="nucleotide sequence ID" value="XM_003482329.4"/>
</dbReference>
<dbReference type="RefSeq" id="XP_005666526.1">
    <property type="nucleotide sequence ID" value="XM_005666469.3"/>
</dbReference>
<dbReference type="RefSeq" id="XP_013833906.1">
    <property type="nucleotide sequence ID" value="XM_013978452.2"/>
</dbReference>
<dbReference type="SMR" id="P56984"/>
<dbReference type="FunCoup" id="P56984">
    <property type="interactions" value="97"/>
</dbReference>
<dbReference type="STRING" id="9823.ENSSSCP00000002830"/>
<dbReference type="PaxDb" id="9823-ENSSSCP00000002830"/>
<dbReference type="Ensembl" id="ENSSSCT00000002909.4">
    <property type="protein sequence ID" value="ENSSSCP00000002830.2"/>
    <property type="gene ID" value="ENSSSCG00000002622.4"/>
</dbReference>
<dbReference type="Ensembl" id="ENSSSCT00015073756.1">
    <property type="protein sequence ID" value="ENSSSCP00015029616.1"/>
    <property type="gene ID" value="ENSSSCG00015055381.1"/>
</dbReference>
<dbReference type="Ensembl" id="ENSSSCT00025067316.1">
    <property type="protein sequence ID" value="ENSSSCP00025028809.1"/>
    <property type="gene ID" value="ENSSSCG00025049444.1"/>
</dbReference>
<dbReference type="Ensembl" id="ENSSSCT00030068883.1">
    <property type="protein sequence ID" value="ENSSSCP00030031462.1"/>
    <property type="gene ID" value="ENSSSCG00030049402.1"/>
</dbReference>
<dbReference type="Ensembl" id="ENSSSCT00035088107.1">
    <property type="protein sequence ID" value="ENSSSCP00035036806.1"/>
    <property type="gene ID" value="ENSSSCG00035065416.1"/>
</dbReference>
<dbReference type="Ensembl" id="ENSSSCT00040007054.1">
    <property type="protein sequence ID" value="ENSSSCP00040002798.1"/>
    <property type="gene ID" value="ENSSSCG00040005339.1"/>
</dbReference>
<dbReference type="Ensembl" id="ENSSSCT00045005175.1">
    <property type="protein sequence ID" value="ENSSSCP00045003430.1"/>
    <property type="gene ID" value="ENSSSCG00045003203.1"/>
</dbReference>
<dbReference type="Ensembl" id="ENSSSCT00050001590.1">
    <property type="protein sequence ID" value="ENSSSCP00050000446.1"/>
    <property type="gene ID" value="ENSSSCG00050001339.1"/>
</dbReference>
<dbReference type="Ensembl" id="ENSSSCT00055026043.1">
    <property type="protein sequence ID" value="ENSSSCP00055020696.1"/>
    <property type="gene ID" value="ENSSSCG00055013247.1"/>
</dbReference>
<dbReference type="Ensembl" id="ENSSSCT00060012938.1">
    <property type="protein sequence ID" value="ENSSSCP00060004894.1"/>
    <property type="gene ID" value="ENSSSCG00060010005.1"/>
</dbReference>
<dbReference type="Ensembl" id="ENSSSCT00065045455.1">
    <property type="protein sequence ID" value="ENSSSCP00065019489.1"/>
    <property type="gene ID" value="ENSSSCG00065033455.1"/>
</dbReference>
<dbReference type="Ensembl" id="ENSSSCT00070017587.1">
    <property type="protein sequence ID" value="ENSSSCP00070014579.1"/>
    <property type="gene ID" value="ENSSSCG00070009067.1"/>
</dbReference>
<dbReference type="Ensembl" id="ENSSSCT00070017596.1">
    <property type="protein sequence ID" value="ENSSSCP00070014587.1"/>
    <property type="gene ID" value="ENSSSCG00070009067.1"/>
</dbReference>
<dbReference type="Ensembl" id="ENSSSCT00070017603.1">
    <property type="protein sequence ID" value="ENSSSCP00070014592.1"/>
    <property type="gene ID" value="ENSSSCG00070009067.1"/>
</dbReference>
<dbReference type="Ensembl" id="ENSSSCT00115018222">
    <property type="protein sequence ID" value="ENSSSCP00115017211"/>
    <property type="gene ID" value="ENSSSCG00115010590"/>
</dbReference>
<dbReference type="GeneID" id="100512176"/>
<dbReference type="KEGG" id="ssc:100512176"/>
<dbReference type="CTD" id="28978"/>
<dbReference type="VGNC" id="VGNC:94094">
    <property type="gene designation" value="TMEM14A"/>
</dbReference>
<dbReference type="eggNOG" id="KOG4267">
    <property type="taxonomic scope" value="Eukaryota"/>
</dbReference>
<dbReference type="GeneTree" id="ENSGT00940000158206"/>
<dbReference type="HOGENOM" id="CLU_096652_4_3_1"/>
<dbReference type="InParanoid" id="P56984"/>
<dbReference type="OMA" id="MGTRYKK"/>
<dbReference type="OrthoDB" id="5620at2759"/>
<dbReference type="TreeFam" id="TF323345"/>
<dbReference type="Proteomes" id="UP000008227">
    <property type="component" value="Chromosome 7"/>
</dbReference>
<dbReference type="Proteomes" id="UP000314985">
    <property type="component" value="Chromosome 7"/>
</dbReference>
<dbReference type="Proteomes" id="UP000694570">
    <property type="component" value="Unplaced"/>
</dbReference>
<dbReference type="Proteomes" id="UP000694571">
    <property type="component" value="Unplaced"/>
</dbReference>
<dbReference type="Proteomes" id="UP000694720">
    <property type="component" value="Unplaced"/>
</dbReference>
<dbReference type="Proteomes" id="UP000694722">
    <property type="component" value="Unplaced"/>
</dbReference>
<dbReference type="Proteomes" id="UP000694723">
    <property type="component" value="Unplaced"/>
</dbReference>
<dbReference type="Proteomes" id="UP000694724">
    <property type="component" value="Unplaced"/>
</dbReference>
<dbReference type="Proteomes" id="UP000694725">
    <property type="component" value="Unplaced"/>
</dbReference>
<dbReference type="Proteomes" id="UP000694726">
    <property type="component" value="Unplaced"/>
</dbReference>
<dbReference type="Proteomes" id="UP000694727">
    <property type="component" value="Unplaced"/>
</dbReference>
<dbReference type="Proteomes" id="UP000694728">
    <property type="component" value="Unplaced"/>
</dbReference>
<dbReference type="Bgee" id="ENSSSCG00000002622">
    <property type="expression patterns" value="Expressed in epididymis and 45 other cell types or tissues"/>
</dbReference>
<dbReference type="ExpressionAtlas" id="P56984">
    <property type="expression patterns" value="baseline and differential"/>
</dbReference>
<dbReference type="GO" id="GO:0005789">
    <property type="term" value="C:endoplasmic reticulum membrane"/>
    <property type="evidence" value="ECO:0000250"/>
    <property type="project" value="UniProtKB"/>
</dbReference>
<dbReference type="GO" id="GO:0031966">
    <property type="term" value="C:mitochondrial membrane"/>
    <property type="evidence" value="ECO:0000250"/>
    <property type="project" value="UniProtKB"/>
</dbReference>
<dbReference type="GO" id="GO:0043066">
    <property type="term" value="P:negative regulation of apoptotic process"/>
    <property type="evidence" value="ECO:0000250"/>
    <property type="project" value="UniProtKB"/>
</dbReference>
<dbReference type="GO" id="GO:1901029">
    <property type="term" value="P:negative regulation of mitochondrial outer membrane permeabilization involved in apoptotic signaling pathway"/>
    <property type="evidence" value="ECO:0000250"/>
    <property type="project" value="UniProtKB"/>
</dbReference>
<dbReference type="GO" id="GO:0070453">
    <property type="term" value="P:regulation of heme biosynthetic process"/>
    <property type="evidence" value="ECO:0000318"/>
    <property type="project" value="GO_Central"/>
</dbReference>
<dbReference type="FunFam" id="1.10.10.1740:FF:000001">
    <property type="entry name" value="Transmembrane protein 14A"/>
    <property type="match status" value="1"/>
</dbReference>
<dbReference type="Gene3D" id="6.10.250.1330">
    <property type="match status" value="1"/>
</dbReference>
<dbReference type="Gene3D" id="1.10.10.1740">
    <property type="entry name" value="Transmembrane protein 14-like"/>
    <property type="match status" value="1"/>
</dbReference>
<dbReference type="InterPro" id="IPR005349">
    <property type="entry name" value="TMEM14"/>
</dbReference>
<dbReference type="InterPro" id="IPR044890">
    <property type="entry name" value="TMEM14_sf"/>
</dbReference>
<dbReference type="PANTHER" id="PTHR12668">
    <property type="entry name" value="TRANSMEMBRANE PROTEIN 14, 15"/>
    <property type="match status" value="1"/>
</dbReference>
<dbReference type="PANTHER" id="PTHR12668:SF11">
    <property type="entry name" value="TRANSMEMBRANE PROTEIN 14A"/>
    <property type="match status" value="1"/>
</dbReference>
<dbReference type="Pfam" id="PF03647">
    <property type="entry name" value="Tmemb_14"/>
    <property type="match status" value="1"/>
</dbReference>
<feature type="chain" id="PRO_0000221171" description="Transmembrane protein 14A">
    <location>
        <begin position="1"/>
        <end position="99"/>
    </location>
</feature>
<feature type="transmembrane region" description="Helical" evidence="2">
    <location>
        <begin position="1"/>
        <end position="21"/>
    </location>
</feature>
<feature type="transmembrane region" description="Helical" evidence="2">
    <location>
        <begin position="24"/>
        <end position="44"/>
    </location>
</feature>
<feature type="transmembrane region" description="Helical" evidence="2">
    <location>
        <begin position="79"/>
        <end position="99"/>
    </location>
</feature>
<accession>P56984</accession>
<comment type="function">
    <text evidence="1">Inhibits apoptosis via negative regulation of the mitochondrial outer membrane permeabilization involved in apoptotic signaling pathway.</text>
</comment>
<comment type="subcellular location">
    <subcellularLocation>
        <location evidence="1">Mitochondrion membrane</location>
        <topology evidence="2">Multi-pass membrane protein</topology>
    </subcellularLocation>
    <subcellularLocation>
        <location evidence="1">Endoplasmic reticulum membrane</location>
    </subcellularLocation>
</comment>
<comment type="similarity">
    <text evidence="3">Belongs to the TMEM14 family.</text>
</comment>
<keyword id="KW-0256">Endoplasmic reticulum</keyword>
<keyword id="KW-0472">Membrane</keyword>
<keyword id="KW-0496">Mitochondrion</keyword>
<keyword id="KW-1185">Reference proteome</keyword>
<keyword id="KW-0812">Transmembrane</keyword>
<keyword id="KW-1133">Transmembrane helix</keyword>
<sequence length="99" mass="10717">MDLIGFGYAALVTFGSILGYKRRGGVPSLIAGLFVGFLAGYGAYRVSLDKRDVKLSLFTAFFLATIMGVRFKRSKKIMPAGLVAGLSLLMILRLVLLLL</sequence>
<gene>
    <name type="primary">TMEM14A</name>
</gene>
<organism>
    <name type="scientific">Sus scrofa</name>
    <name type="common">Pig</name>
    <dbReference type="NCBI Taxonomy" id="9823"/>
    <lineage>
        <taxon>Eukaryota</taxon>
        <taxon>Metazoa</taxon>
        <taxon>Chordata</taxon>
        <taxon>Craniata</taxon>
        <taxon>Vertebrata</taxon>
        <taxon>Euteleostomi</taxon>
        <taxon>Mammalia</taxon>
        <taxon>Eutheria</taxon>
        <taxon>Laurasiatheria</taxon>
        <taxon>Artiodactyla</taxon>
        <taxon>Suina</taxon>
        <taxon>Suidae</taxon>
        <taxon>Sus</taxon>
    </lineage>
</organism>
<reference key="1">
    <citation type="submission" date="2000-07" db="EMBL/GenBank/DDBJ databases">
        <title>Design and use of two pooled tissue normalized cDNA libraries for EST discovery in swine.</title>
        <authorList>
            <person name="Fahrenkrug S.C."/>
            <person name="Freking B.A."/>
            <person name="Rohrer G.A."/>
            <person name="Smith T.P.L."/>
            <person name="Casas E."/>
            <person name="Stone R.T."/>
            <person name="Heaton M.P."/>
            <person name="Grosse W.M."/>
            <person name="Bennett G.A."/>
            <person name="Laegreid W.W."/>
            <person name="Keele J.W."/>
        </authorList>
    </citation>
    <scope>NUCLEOTIDE SEQUENCE [MRNA]</scope>
</reference>
<reference key="2">
    <citation type="unpublished observations" date="2000-08">
        <authorList>
            <person name="Bairoch A."/>
        </authorList>
    </citation>
    <scope>RECONSTRUCTION FROM ESTS</scope>
</reference>
<evidence type="ECO:0000250" key="1">
    <source>
        <dbReference type="UniProtKB" id="Q9Y6G1"/>
    </source>
</evidence>
<evidence type="ECO:0000255" key="2"/>
<evidence type="ECO:0000305" key="3"/>